<protein>
    <recommendedName>
        <fullName>Soluble cytochrome b562</fullName>
        <shortName>Cytochrome b-562</shortName>
    </recommendedName>
</protein>
<proteinExistence type="inferred from homology"/>
<evidence type="ECO:0000250" key="1"/>
<evidence type="ECO:0000305" key="2"/>
<keyword id="KW-0249">Electron transport</keyword>
<keyword id="KW-0349">Heme</keyword>
<keyword id="KW-0408">Iron</keyword>
<keyword id="KW-0479">Metal-binding</keyword>
<keyword id="KW-0574">Periplasm</keyword>
<keyword id="KW-1185">Reference proteome</keyword>
<keyword id="KW-0732">Signal</keyword>
<keyword id="KW-0813">Transport</keyword>
<name>C562_ECOL6</name>
<reference key="1">
    <citation type="journal article" date="2002" name="Proc. Natl. Acad. Sci. U.S.A.">
        <title>Extensive mosaic structure revealed by the complete genome sequence of uropathogenic Escherichia coli.</title>
        <authorList>
            <person name="Welch R.A."/>
            <person name="Burland V."/>
            <person name="Plunkett G. III"/>
            <person name="Redford P."/>
            <person name="Roesch P."/>
            <person name="Rasko D."/>
            <person name="Buckles E.L."/>
            <person name="Liou S.-R."/>
            <person name="Boutin A."/>
            <person name="Hackett J."/>
            <person name="Stroud D."/>
            <person name="Mayhew G.F."/>
            <person name="Rose D.J."/>
            <person name="Zhou S."/>
            <person name="Schwartz D.C."/>
            <person name="Perna N.T."/>
            <person name="Mobley H.L.T."/>
            <person name="Donnenberg M.S."/>
            <person name="Blattner F.R."/>
        </authorList>
    </citation>
    <scope>NUCLEOTIDE SEQUENCE [LARGE SCALE GENOMIC DNA]</scope>
    <source>
        <strain>CFT073 / ATCC 700928 / UPEC</strain>
    </source>
</reference>
<comment type="function">
    <text evidence="1">Electron-transport protein of unknown function.</text>
</comment>
<comment type="cofactor">
    <cofactor evidence="1">
        <name>heme b</name>
        <dbReference type="ChEBI" id="CHEBI:60344"/>
    </cofactor>
    <text evidence="1">Binds 1 heme b (iron(II)-protoporphyrin IX) group per molecule.</text>
</comment>
<comment type="subunit">
    <text evidence="1">Monomer.</text>
</comment>
<comment type="subcellular location">
    <subcellularLocation>
        <location evidence="1">Periplasm</location>
    </subcellularLocation>
</comment>
<comment type="similarity">
    <text evidence="2">Belongs to the cytochrome b562 family.</text>
</comment>
<sequence>MRKSLLAILAVSSLVFSSASFAADLEDNMETLNDNLKVVEKADNAVQVKDALTKMRAAALDAQKATPPKLEGKSPDSPEMKDFRHGFDILVGQIDDALKLANEGKVKEAQAAAEQLKTTRNAYHQKYR</sequence>
<dbReference type="EMBL" id="AE014075">
    <property type="protein sequence ID" value="AAN83756.1"/>
    <property type="molecule type" value="Genomic_DNA"/>
</dbReference>
<dbReference type="RefSeq" id="WP_001232253.1">
    <property type="nucleotide sequence ID" value="NZ_CP051263.1"/>
</dbReference>
<dbReference type="BMRB" id="Q8CVG7"/>
<dbReference type="SMR" id="Q8CVG7"/>
<dbReference type="STRING" id="199310.c5335"/>
<dbReference type="KEGG" id="ecc:c5335"/>
<dbReference type="eggNOG" id="COG3783">
    <property type="taxonomic scope" value="Bacteria"/>
</dbReference>
<dbReference type="HOGENOM" id="CLU_140814_1_1_6"/>
<dbReference type="BioCyc" id="ECOL199310:C5335-MONOMER"/>
<dbReference type="Proteomes" id="UP000001410">
    <property type="component" value="Chromosome"/>
</dbReference>
<dbReference type="GO" id="GO:0042597">
    <property type="term" value="C:periplasmic space"/>
    <property type="evidence" value="ECO:0007669"/>
    <property type="project" value="UniProtKB-SubCell"/>
</dbReference>
<dbReference type="GO" id="GO:0009055">
    <property type="term" value="F:electron transfer activity"/>
    <property type="evidence" value="ECO:0007669"/>
    <property type="project" value="InterPro"/>
</dbReference>
<dbReference type="GO" id="GO:0020037">
    <property type="term" value="F:heme binding"/>
    <property type="evidence" value="ECO:0007669"/>
    <property type="project" value="InterPro"/>
</dbReference>
<dbReference type="GO" id="GO:0005506">
    <property type="term" value="F:iron ion binding"/>
    <property type="evidence" value="ECO:0007669"/>
    <property type="project" value="InterPro"/>
</dbReference>
<dbReference type="GO" id="GO:0022900">
    <property type="term" value="P:electron transport chain"/>
    <property type="evidence" value="ECO:0007669"/>
    <property type="project" value="InterPro"/>
</dbReference>
<dbReference type="Gene3D" id="1.20.120.10">
    <property type="entry name" value="Cytochrome c/b562"/>
    <property type="match status" value="1"/>
</dbReference>
<dbReference type="InterPro" id="IPR009155">
    <property type="entry name" value="Cyt_b562"/>
</dbReference>
<dbReference type="InterPro" id="IPR010980">
    <property type="entry name" value="Cyt_c/b562"/>
</dbReference>
<dbReference type="NCBIfam" id="NF011632">
    <property type="entry name" value="PRK15058.1"/>
    <property type="match status" value="1"/>
</dbReference>
<dbReference type="Pfam" id="PF07361">
    <property type="entry name" value="Cytochrom_B562"/>
    <property type="match status" value="1"/>
</dbReference>
<dbReference type="PIRSF" id="PIRSF000029">
    <property type="entry name" value="Cytochrome_b562"/>
    <property type="match status" value="1"/>
</dbReference>
<dbReference type="SUPFAM" id="SSF47175">
    <property type="entry name" value="Cytochromes"/>
    <property type="match status" value="1"/>
</dbReference>
<feature type="signal peptide" evidence="1">
    <location>
        <begin position="1"/>
        <end position="22"/>
    </location>
</feature>
<feature type="chain" id="PRO_0000042669" description="Soluble cytochrome b562">
    <location>
        <begin position="23"/>
        <end position="128"/>
    </location>
</feature>
<feature type="binding site" description="axial binding residue" evidence="1">
    <location>
        <position position="29"/>
    </location>
    <ligand>
        <name>heme b</name>
        <dbReference type="ChEBI" id="CHEBI:60344"/>
    </ligand>
    <ligandPart>
        <name>Fe</name>
        <dbReference type="ChEBI" id="CHEBI:18248"/>
    </ligandPart>
</feature>
<feature type="binding site" description="axial binding residue" evidence="1">
    <location>
        <position position="124"/>
    </location>
    <ligand>
        <name>heme b</name>
        <dbReference type="ChEBI" id="CHEBI:60344"/>
    </ligand>
    <ligandPart>
        <name>Fe</name>
        <dbReference type="ChEBI" id="CHEBI:18248"/>
    </ligandPart>
</feature>
<gene>
    <name type="primary">cybC</name>
    <name type="ordered locus">c5335</name>
</gene>
<accession>Q8CVG7</accession>
<organism>
    <name type="scientific">Escherichia coli O6:H1 (strain CFT073 / ATCC 700928 / UPEC)</name>
    <dbReference type="NCBI Taxonomy" id="199310"/>
    <lineage>
        <taxon>Bacteria</taxon>
        <taxon>Pseudomonadati</taxon>
        <taxon>Pseudomonadota</taxon>
        <taxon>Gammaproteobacteria</taxon>
        <taxon>Enterobacterales</taxon>
        <taxon>Enterobacteriaceae</taxon>
        <taxon>Escherichia</taxon>
    </lineage>
</organism>